<dbReference type="EMBL" id="CU329672">
    <property type="protein sequence ID" value="CAB41222.1"/>
    <property type="molecule type" value="Genomic_DNA"/>
</dbReference>
<dbReference type="PIR" id="T41182">
    <property type="entry name" value="T41182"/>
</dbReference>
<dbReference type="RefSeq" id="NP_588206.1">
    <property type="nucleotide sequence ID" value="NM_001023196.2"/>
</dbReference>
<dbReference type="SMR" id="Q10428"/>
<dbReference type="BioGRID" id="275945">
    <property type="interactions" value="304"/>
</dbReference>
<dbReference type="DIP" id="DIP-36612N"/>
<dbReference type="FunCoup" id="Q10428">
    <property type="interactions" value="426"/>
</dbReference>
<dbReference type="IntAct" id="Q10428">
    <property type="interactions" value="3"/>
</dbReference>
<dbReference type="STRING" id="284812.Q10428"/>
<dbReference type="iPTMnet" id="Q10428"/>
<dbReference type="PaxDb" id="4896-SPCC188.02.1"/>
<dbReference type="EnsemblFungi" id="SPCC188.02.1">
    <property type="protein sequence ID" value="SPCC188.02.1:pep"/>
    <property type="gene ID" value="SPCC188.02"/>
</dbReference>
<dbReference type="GeneID" id="2539379"/>
<dbReference type="KEGG" id="spo:2539379"/>
<dbReference type="PomBase" id="SPCC188.02">
    <property type="gene designation" value="par1"/>
</dbReference>
<dbReference type="VEuPathDB" id="FungiDB:SPCC188.02"/>
<dbReference type="eggNOG" id="KOG2085">
    <property type="taxonomic scope" value="Eukaryota"/>
</dbReference>
<dbReference type="HOGENOM" id="CLU_012437_1_2_1"/>
<dbReference type="InParanoid" id="Q10428"/>
<dbReference type="OMA" id="ECSHEYT"/>
<dbReference type="PhylomeDB" id="Q10428"/>
<dbReference type="Reactome" id="R-SPO-389513">
    <property type="pathway name" value="Co-inhibition by CTLA4"/>
</dbReference>
<dbReference type="Reactome" id="R-SPO-6811558">
    <property type="pathway name" value="PI5P, PP2A and IER3 Regulate PI3K/AKT Signaling"/>
</dbReference>
<dbReference type="CD-CODE" id="576F0A76">
    <property type="entry name" value="Centrosome"/>
</dbReference>
<dbReference type="PRO" id="PR:Q10428"/>
<dbReference type="Proteomes" id="UP000002485">
    <property type="component" value="Chromosome III"/>
</dbReference>
<dbReference type="GO" id="GO:0032153">
    <property type="term" value="C:cell division site"/>
    <property type="evidence" value="ECO:0000314"/>
    <property type="project" value="PomBase"/>
</dbReference>
<dbReference type="GO" id="GO:0000775">
    <property type="term" value="C:chromosome, centromeric region"/>
    <property type="evidence" value="ECO:0000314"/>
    <property type="project" value="PomBase"/>
</dbReference>
<dbReference type="GO" id="GO:0005737">
    <property type="term" value="C:cytoplasm"/>
    <property type="evidence" value="ECO:0000314"/>
    <property type="project" value="PomBase"/>
</dbReference>
<dbReference type="GO" id="GO:0005829">
    <property type="term" value="C:cytosol"/>
    <property type="evidence" value="ECO:0007005"/>
    <property type="project" value="PomBase"/>
</dbReference>
<dbReference type="GO" id="GO:0000939">
    <property type="term" value="C:inner kinetochore"/>
    <property type="evidence" value="ECO:0000314"/>
    <property type="project" value="PomBase"/>
</dbReference>
<dbReference type="GO" id="GO:0072687">
    <property type="term" value="C:meiotic spindle"/>
    <property type="evidence" value="ECO:0000314"/>
    <property type="project" value="PomBase"/>
</dbReference>
<dbReference type="GO" id="GO:0110085">
    <property type="term" value="C:mitotic actomyosin contractile ring"/>
    <property type="evidence" value="ECO:0000314"/>
    <property type="project" value="PomBase"/>
</dbReference>
<dbReference type="GO" id="GO:0044732">
    <property type="term" value="C:mitotic spindle pole body"/>
    <property type="evidence" value="ECO:0000314"/>
    <property type="project" value="PomBase"/>
</dbReference>
<dbReference type="GO" id="GO:0005634">
    <property type="term" value="C:nucleus"/>
    <property type="evidence" value="ECO:0007669"/>
    <property type="project" value="UniProtKB-SubCell"/>
</dbReference>
<dbReference type="GO" id="GO:0000159">
    <property type="term" value="C:protein phosphatase type 2A complex"/>
    <property type="evidence" value="ECO:0000314"/>
    <property type="project" value="PomBase"/>
</dbReference>
<dbReference type="GO" id="GO:0072542">
    <property type="term" value="F:protein phosphatase activator activity"/>
    <property type="evidence" value="ECO:0000269"/>
    <property type="project" value="PomBase"/>
</dbReference>
<dbReference type="GO" id="GO:0030674">
    <property type="term" value="F:protein-macromolecule adaptor activity"/>
    <property type="evidence" value="ECO:0000269"/>
    <property type="project" value="PomBase"/>
</dbReference>
<dbReference type="GO" id="GO:1902426">
    <property type="term" value="P:deactivation of mitotic spindle assembly checkpoint"/>
    <property type="evidence" value="ECO:0000315"/>
    <property type="project" value="PomBase"/>
</dbReference>
<dbReference type="GO" id="GO:1990813">
    <property type="term" value="P:meiotic centromeric cohesion protection in anaphase I"/>
    <property type="evidence" value="ECO:0000315"/>
    <property type="project" value="PomBase"/>
</dbReference>
<dbReference type="GO" id="GO:0051177">
    <property type="term" value="P:meiotic sister chromatid cohesion"/>
    <property type="evidence" value="ECO:0000318"/>
    <property type="project" value="GO_Central"/>
</dbReference>
<dbReference type="GO" id="GO:0031568">
    <property type="term" value="P:mitotic G1 cell size control checkpoint signaling"/>
    <property type="evidence" value="ECO:0000315"/>
    <property type="project" value="PomBase"/>
</dbReference>
<dbReference type="GO" id="GO:0031030">
    <property type="term" value="P:negative regulation of septation initiation signaling"/>
    <property type="evidence" value="ECO:0000315"/>
    <property type="project" value="PomBase"/>
</dbReference>
<dbReference type="GO" id="GO:0007089">
    <property type="term" value="P:traversing start control point of mitotic cell cycle"/>
    <property type="evidence" value="ECO:0000315"/>
    <property type="project" value="PomBase"/>
</dbReference>
<dbReference type="FunFam" id="1.25.10.10:FF:000016">
    <property type="entry name" value="Serine/threonine-protein phosphatase 2A 56 kDa regulatory subunit"/>
    <property type="match status" value="1"/>
</dbReference>
<dbReference type="Gene3D" id="1.25.10.10">
    <property type="entry name" value="Leucine-rich Repeat Variant"/>
    <property type="match status" value="1"/>
</dbReference>
<dbReference type="InterPro" id="IPR011989">
    <property type="entry name" value="ARM-like"/>
</dbReference>
<dbReference type="InterPro" id="IPR016024">
    <property type="entry name" value="ARM-type_fold"/>
</dbReference>
<dbReference type="InterPro" id="IPR002554">
    <property type="entry name" value="PP2A_B56"/>
</dbReference>
<dbReference type="PANTHER" id="PTHR10257">
    <property type="entry name" value="SERINE/THREONINE PROTEIN PHOSPHATASE 2A PP2A REGULATORY SUBUNIT B"/>
    <property type="match status" value="1"/>
</dbReference>
<dbReference type="PANTHER" id="PTHR10257:SF110">
    <property type="entry name" value="SERINE_THREONINE-PROTEIN PHOSPHATASE 2A 56 KDA REGULATORY SUBUNIT DELTA 1 ISOFORM"/>
    <property type="match status" value="1"/>
</dbReference>
<dbReference type="Pfam" id="PF01603">
    <property type="entry name" value="B56"/>
    <property type="match status" value="1"/>
</dbReference>
<dbReference type="PIRSF" id="PIRSF028043">
    <property type="entry name" value="PP2A_B56"/>
    <property type="match status" value="1"/>
</dbReference>
<dbReference type="SUPFAM" id="SSF48371">
    <property type="entry name" value="ARM repeat"/>
    <property type="match status" value="1"/>
</dbReference>
<protein>
    <recommendedName>
        <fullName>Serine/threonine-protein phosphatase 2A 56 kDa regulatory subunit delta 1 isoform</fullName>
    </recommendedName>
    <alternativeName>
        <fullName>PP2A, B subunit, B' delta 1 isoform</fullName>
    </alternativeName>
</protein>
<reference key="1">
    <citation type="journal article" date="2000" name="Genetics">
        <title>Isolation and characterization of par1(+) and par2(+): two Schizosaccharomyces pombe genes encoding B' subunits of protein phosphatase 2A.</title>
        <authorList>
            <person name="Jiang W."/>
            <person name="Hallberg R.L."/>
        </authorList>
    </citation>
    <scope>NUCLEOTIDE SEQUENCE [GENOMIC DNA]</scope>
    <scope>FUNCTION</scope>
    <scope>SUBCELLULAR LOCATION</scope>
</reference>
<reference key="2">
    <citation type="journal article" date="2002" name="Nature">
        <title>The genome sequence of Schizosaccharomyces pombe.</title>
        <authorList>
            <person name="Wood V."/>
            <person name="Gwilliam R."/>
            <person name="Rajandream M.A."/>
            <person name="Lyne M.H."/>
            <person name="Lyne R."/>
            <person name="Stewart A."/>
            <person name="Sgouros J.G."/>
            <person name="Peat N."/>
            <person name="Hayles J."/>
            <person name="Baker S.G."/>
            <person name="Basham D."/>
            <person name="Bowman S."/>
            <person name="Brooks K."/>
            <person name="Brown D."/>
            <person name="Brown S."/>
            <person name="Chillingworth T."/>
            <person name="Churcher C.M."/>
            <person name="Collins M."/>
            <person name="Connor R."/>
            <person name="Cronin A."/>
            <person name="Davis P."/>
            <person name="Feltwell T."/>
            <person name="Fraser A."/>
            <person name="Gentles S."/>
            <person name="Goble A."/>
            <person name="Hamlin N."/>
            <person name="Harris D.E."/>
            <person name="Hidalgo J."/>
            <person name="Hodgson G."/>
            <person name="Holroyd S."/>
            <person name="Hornsby T."/>
            <person name="Howarth S."/>
            <person name="Huckle E.J."/>
            <person name="Hunt S."/>
            <person name="Jagels K."/>
            <person name="James K.D."/>
            <person name="Jones L."/>
            <person name="Jones M."/>
            <person name="Leather S."/>
            <person name="McDonald S."/>
            <person name="McLean J."/>
            <person name="Mooney P."/>
            <person name="Moule S."/>
            <person name="Mungall K.L."/>
            <person name="Murphy L.D."/>
            <person name="Niblett D."/>
            <person name="Odell C."/>
            <person name="Oliver K."/>
            <person name="O'Neil S."/>
            <person name="Pearson D."/>
            <person name="Quail M.A."/>
            <person name="Rabbinowitsch E."/>
            <person name="Rutherford K.M."/>
            <person name="Rutter S."/>
            <person name="Saunders D."/>
            <person name="Seeger K."/>
            <person name="Sharp S."/>
            <person name="Skelton J."/>
            <person name="Simmonds M.N."/>
            <person name="Squares R."/>
            <person name="Squares S."/>
            <person name="Stevens K."/>
            <person name="Taylor K."/>
            <person name="Taylor R.G."/>
            <person name="Tivey A."/>
            <person name="Walsh S.V."/>
            <person name="Warren T."/>
            <person name="Whitehead S."/>
            <person name="Woodward J.R."/>
            <person name="Volckaert G."/>
            <person name="Aert R."/>
            <person name="Robben J."/>
            <person name="Grymonprez B."/>
            <person name="Weltjens I."/>
            <person name="Vanstreels E."/>
            <person name="Rieger M."/>
            <person name="Schaefer M."/>
            <person name="Mueller-Auer S."/>
            <person name="Gabel C."/>
            <person name="Fuchs M."/>
            <person name="Duesterhoeft A."/>
            <person name="Fritzc C."/>
            <person name="Holzer E."/>
            <person name="Moestl D."/>
            <person name="Hilbert H."/>
            <person name="Borzym K."/>
            <person name="Langer I."/>
            <person name="Beck A."/>
            <person name="Lehrach H."/>
            <person name="Reinhardt R."/>
            <person name="Pohl T.M."/>
            <person name="Eger P."/>
            <person name="Zimmermann W."/>
            <person name="Wedler H."/>
            <person name="Wambutt R."/>
            <person name="Purnelle B."/>
            <person name="Goffeau A."/>
            <person name="Cadieu E."/>
            <person name="Dreano S."/>
            <person name="Gloux S."/>
            <person name="Lelaure V."/>
            <person name="Mottier S."/>
            <person name="Galibert F."/>
            <person name="Aves S.J."/>
            <person name="Xiang Z."/>
            <person name="Hunt C."/>
            <person name="Moore K."/>
            <person name="Hurst S.M."/>
            <person name="Lucas M."/>
            <person name="Rochet M."/>
            <person name="Gaillardin C."/>
            <person name="Tallada V.A."/>
            <person name="Garzon A."/>
            <person name="Thode G."/>
            <person name="Daga R.R."/>
            <person name="Cruzado L."/>
            <person name="Jimenez J."/>
            <person name="Sanchez M."/>
            <person name="del Rey F."/>
            <person name="Benito J."/>
            <person name="Dominguez A."/>
            <person name="Revuelta J.L."/>
            <person name="Moreno S."/>
            <person name="Armstrong J."/>
            <person name="Forsburg S.L."/>
            <person name="Cerutti L."/>
            <person name="Lowe T."/>
            <person name="McCombie W.R."/>
            <person name="Paulsen I."/>
            <person name="Potashkin J."/>
            <person name="Shpakovski G.V."/>
            <person name="Ussery D."/>
            <person name="Barrell B.G."/>
            <person name="Nurse P."/>
        </authorList>
    </citation>
    <scope>NUCLEOTIDE SEQUENCE [LARGE SCALE GENOMIC DNA]</scope>
    <source>
        <strain>972 / ATCC 24843</strain>
    </source>
</reference>
<reference key="3">
    <citation type="journal article" date="2001" name="Genes Cells">
        <title>Fission yeast homologues of the B' subunit of protein phosphatase 2A: multiple roles in mitotic cell division and functional interaction with calcineurin.</title>
        <authorList>
            <person name="Tanabe O."/>
            <person name="Hirata D."/>
            <person name="Usui H."/>
            <person name="Nishito Y."/>
            <person name="Miyakawa T."/>
            <person name="Igarashi K."/>
            <person name="Takeda M."/>
        </authorList>
    </citation>
    <scope>IDENTIFICATION</scope>
    <scope>FUNCTION</scope>
    <scope>SUBUNIT</scope>
    <scope>SUBCELLULAR LOCATION</scope>
</reference>
<reference key="4">
    <citation type="journal article" date="2008" name="J. Proteome Res.">
        <title>Phosphoproteome analysis of fission yeast.</title>
        <authorList>
            <person name="Wilson-Grady J.T."/>
            <person name="Villen J."/>
            <person name="Gygi S.P."/>
        </authorList>
    </citation>
    <scope>PHOSPHORYLATION [LARGE SCALE ANALYSIS] AT TYR-96; SER-99; SER-109 AND SER-542</scope>
    <scope>IDENTIFICATION BY MASS SPECTROMETRY</scope>
</reference>
<gene>
    <name type="primary">par1</name>
    <name type="synonym">pbp1</name>
    <name type="ORF">SPCC188.02</name>
</gene>
<organism>
    <name type="scientific">Schizosaccharomyces pombe (strain 972 / ATCC 24843)</name>
    <name type="common">Fission yeast</name>
    <dbReference type="NCBI Taxonomy" id="284812"/>
    <lineage>
        <taxon>Eukaryota</taxon>
        <taxon>Fungi</taxon>
        <taxon>Dikarya</taxon>
        <taxon>Ascomycota</taxon>
        <taxon>Taphrinomycotina</taxon>
        <taxon>Schizosaccharomycetes</taxon>
        <taxon>Schizosaccharomycetales</taxon>
        <taxon>Schizosaccharomycetaceae</taxon>
        <taxon>Schizosaccharomyces</taxon>
    </lineage>
</organism>
<evidence type="ECO:0000256" key="1">
    <source>
        <dbReference type="SAM" id="MobiDB-lite"/>
    </source>
</evidence>
<evidence type="ECO:0000269" key="2">
    <source>
    </source>
</evidence>
<evidence type="ECO:0000269" key="3">
    <source>
    </source>
</evidence>
<evidence type="ECO:0000269" key="4">
    <source>
    </source>
</evidence>
<evidence type="ECO:0000305" key="5"/>
<feature type="chain" id="PRO_0000071469" description="Serine/threonine-protein phosphatase 2A 56 kDa regulatory subunit delta 1 isoform">
    <location>
        <begin position="1"/>
        <end position="548"/>
    </location>
</feature>
<feature type="region of interest" description="Disordered" evidence="1">
    <location>
        <begin position="1"/>
        <end position="75"/>
    </location>
</feature>
<feature type="compositionally biased region" description="Basic residues" evidence="1">
    <location>
        <begin position="1"/>
        <end position="10"/>
    </location>
</feature>
<feature type="compositionally biased region" description="Basic and acidic residues" evidence="1">
    <location>
        <begin position="27"/>
        <end position="39"/>
    </location>
</feature>
<feature type="modified residue" description="Phosphotyrosine" evidence="4">
    <location>
        <position position="96"/>
    </location>
</feature>
<feature type="modified residue" description="Phosphoserine" evidence="4">
    <location>
        <position position="99"/>
    </location>
</feature>
<feature type="modified residue" description="Phosphoserine" evidence="4">
    <location>
        <position position="109"/>
    </location>
</feature>
<feature type="modified residue" description="Phosphoserine" evidence="4">
    <location>
        <position position="542"/>
    </location>
</feature>
<proteinExistence type="evidence at protein level"/>
<comment type="function">
    <text evidence="2 3">The B regulatory subunit might modulate substrate selectivity and catalytic activity, and might also direct the localization of the catalytic enzyme to a particular subcellular compartment. Has a role in cell shape control and septum formation.</text>
</comment>
<comment type="subunit">
    <text evidence="3">PP2A consists of a common heterodimeric core enzyme, composed of a 36 kDa catalytic subunit (subunit C) and a 65 kDa constant regulatory subunit (PR65 or subunit A), that associates with a variety of regulatory subunits. Proteins that associate with the core dimer include three families of regulatory subunits B (the R2/B/PR55/B55, R3/B''/PR72/PR130/PR59 and R5/B'/B56 families), the 48 kDa variable regulatory subunit, viral proteins, and cell signaling molecules.</text>
</comment>
<comment type="interaction">
    <interactant intactId="EBI-989357">
        <id>Q10428</id>
    </interactant>
    <interactant intactId="EBI-4320127">
        <id>P13681</id>
        <label>dis2</label>
    </interactant>
    <organismsDiffer>false</organismsDiffer>
    <experiments>12</experiments>
</comment>
<comment type="interaction">
    <interactant intactId="EBI-989357">
        <id>Q10428</id>
    </interactant>
    <interactant intactId="EBI-16132377">
        <id>Q9UT08</id>
        <label>paa1</label>
    </interactant>
    <organismsDiffer>false</organismsDiffer>
    <experiments>6</experiments>
</comment>
<comment type="interaction">
    <interactant intactId="EBI-989357">
        <id>Q10428</id>
    </interactant>
    <interactant intactId="EBI-989427">
        <id>Q9P7A0</id>
        <label>sgo1</label>
    </interactant>
    <organismsDiffer>false</organismsDiffer>
    <experiments>4</experiments>
</comment>
<comment type="subcellular location">
    <subcellularLocation>
        <location>Cytoplasm</location>
    </subcellularLocation>
    <subcellularLocation>
        <location>Nucleus</location>
    </subcellularLocation>
</comment>
<comment type="similarity">
    <text evidence="5">Belongs to the phosphatase 2A regulatory subunit B family.</text>
</comment>
<sequence length="548" mass="63346">MKGIKSKMLSRGKSQDTQKSSKKKESKKSNSHDSSKAPKESPSTDPNGSVIGAQNDFLTVPKHSGKKVPIDTTPTPRDEILLENVRTVRKQRSSLYHISENRNLVRLPSFTDVPVNKWHSLALEKLEQCCVVFDFNDPSTDLYGKEVKREALQDLIDLISVRKEAIDESLYPSIVHMFAVNVFRPLPPPSNPPGEIMDLEEDEPALEVAWPHLHLVYDFFLRFFESPSLNTSVAKVYINQKFIRKLLVLFDSEDPRERDFLKTTLHRIYGKFLSLRAFIRRSINNLFLQFVYENEQFNGIAELLEILGSIINGFALPLKEEHKIFLSRVLIPLHKAKSLPLYYPQIAYGIVQFVEKDSSVTEEVVLGLLRYWPKVNSSKEVLFLNEIEDIIEVMEPSEFLKIQVPLFHKLATSISSQNFQVAERALYFFNNDYFVHLVEENVDIILPIIYPALFEISKSHWNRVIHSMVCNVLKLFMDINPSLFDEVDAEYSESRRKKEDEEIIREERWTILENIAKENAMKLKSQNPTTVHSTTERLKKLSLDYTNG</sequence>
<accession>Q10428</accession>
<keyword id="KW-0963">Cytoplasm</keyword>
<keyword id="KW-0539">Nucleus</keyword>
<keyword id="KW-0597">Phosphoprotein</keyword>
<keyword id="KW-1185">Reference proteome</keyword>
<name>2AD1_SCHPO</name>